<protein>
    <recommendedName>
        <fullName evidence="1">Anaerobic glycerol-3-phosphate dehydrogenase subunit B</fullName>
        <shortName evidence="1">Anaerobic G-3-P dehydrogenase subunit B</shortName>
        <shortName evidence="1">Anaerobic G3Pdhase B</shortName>
        <ecNumber evidence="1">1.1.5.3</ecNumber>
    </recommendedName>
</protein>
<comment type="function">
    <text evidence="1">Conversion of glycerol 3-phosphate to dihydroxyacetone. Uses fumarate or nitrate as electron acceptor.</text>
</comment>
<comment type="catalytic activity">
    <reaction evidence="1">
        <text>a quinone + sn-glycerol 3-phosphate = dihydroxyacetone phosphate + a quinol</text>
        <dbReference type="Rhea" id="RHEA:18977"/>
        <dbReference type="ChEBI" id="CHEBI:24646"/>
        <dbReference type="ChEBI" id="CHEBI:57597"/>
        <dbReference type="ChEBI" id="CHEBI:57642"/>
        <dbReference type="ChEBI" id="CHEBI:132124"/>
        <dbReference type="EC" id="1.1.5.3"/>
    </reaction>
</comment>
<comment type="cofactor">
    <cofactor evidence="1">
        <name>FMN</name>
        <dbReference type="ChEBI" id="CHEBI:58210"/>
    </cofactor>
</comment>
<comment type="pathway">
    <text evidence="1">Polyol metabolism; glycerol degradation via glycerol kinase pathway; glycerone phosphate from sn-glycerol 3-phosphate (anaerobic route): step 1/1.</text>
</comment>
<comment type="subunit">
    <text evidence="1">Composed of a catalytic GlpA/B dimer and of membrane bound GlpC.</text>
</comment>
<comment type="similarity">
    <text evidence="1">Belongs to the anaerobic G-3-P dehydrogenase subunit B family.</text>
</comment>
<organism>
    <name type="scientific">Aliivibrio fischeri (strain ATCC 700601 / ES114)</name>
    <name type="common">Vibrio fischeri</name>
    <dbReference type="NCBI Taxonomy" id="312309"/>
    <lineage>
        <taxon>Bacteria</taxon>
        <taxon>Pseudomonadati</taxon>
        <taxon>Pseudomonadota</taxon>
        <taxon>Gammaproteobacteria</taxon>
        <taxon>Vibrionales</taxon>
        <taxon>Vibrionaceae</taxon>
        <taxon>Aliivibrio</taxon>
    </lineage>
</organism>
<accession>Q5E0X7</accession>
<reference key="1">
    <citation type="journal article" date="2005" name="Proc. Natl. Acad. Sci. U.S.A.">
        <title>Complete genome sequence of Vibrio fischeri: a symbiotic bacterium with pathogenic congeners.</title>
        <authorList>
            <person name="Ruby E.G."/>
            <person name="Urbanowski M."/>
            <person name="Campbell J."/>
            <person name="Dunn A."/>
            <person name="Faini M."/>
            <person name="Gunsalus R."/>
            <person name="Lostroh P."/>
            <person name="Lupp C."/>
            <person name="McCann J."/>
            <person name="Millikan D."/>
            <person name="Schaefer A."/>
            <person name="Stabb E."/>
            <person name="Stevens A."/>
            <person name="Visick K."/>
            <person name="Whistler C."/>
            <person name="Greenberg E.P."/>
        </authorList>
    </citation>
    <scope>NUCLEOTIDE SEQUENCE [LARGE SCALE GENOMIC DNA]</scope>
    <source>
        <strain>ATCC 700601 / ES114</strain>
    </source>
</reference>
<evidence type="ECO:0000255" key="1">
    <source>
        <dbReference type="HAMAP-Rule" id="MF_00753"/>
    </source>
</evidence>
<sequence length="455" mass="49930">MNFDTIIIGGGMAGLSCALRCLEAGLKTAVIASGQSALHFSSGSIDVLAKTPSGKHVINPMDSLETFSKEYPSHPYAALGKETVERAINWYKTTLSAIGVPLTSQKDGLNHYRLTPLGTMKSTWLSQPFVHQFPMDLEKNKTQKMVLITIDGFRDFQPKLAQDNLKQITQLSDLEIATASISLSAFNDIQRNHCELRSIDISRLLSKRANRQELAYALQQHANPGDLVVLPSIFGNGTGLSYLREIEQLTKLTLCEVPTMPPSLLGIRLEESMKHAFIELGGTMLNGDHVVQGEFSYVDKSDPEHSHYRLNRLFTKNHGDFPLQAKQFVLATGSFFSQGLKANVDSMIEPIFGLDIAQSDKRTDWYSHDFFSTQSHPFLSMGIKTTANFQAIKSGHVIDNLYCAGAILSGYNPILEGSGSGVAISSGFHAAESIIEQLQCSDSLQNNNTKAEVAL</sequence>
<feature type="chain" id="PRO_0000258910" description="Anaerobic glycerol-3-phosphate dehydrogenase subunit B">
    <location>
        <begin position="1"/>
        <end position="455"/>
    </location>
</feature>
<keyword id="KW-0285">Flavoprotein</keyword>
<keyword id="KW-0288">FMN</keyword>
<keyword id="KW-0560">Oxidoreductase</keyword>
<keyword id="KW-1185">Reference proteome</keyword>
<proteinExistence type="inferred from homology"/>
<name>GLPB_ALIF1</name>
<dbReference type="EC" id="1.1.5.3" evidence="1"/>
<dbReference type="EMBL" id="CP000021">
    <property type="protein sequence ID" value="AAW87319.1"/>
    <property type="molecule type" value="Genomic_DNA"/>
</dbReference>
<dbReference type="RefSeq" id="WP_011263143.1">
    <property type="nucleotide sequence ID" value="NC_006841.2"/>
</dbReference>
<dbReference type="RefSeq" id="YP_206207.1">
    <property type="nucleotide sequence ID" value="NC_006841.2"/>
</dbReference>
<dbReference type="STRING" id="312309.VF_A0249"/>
<dbReference type="EnsemblBacteria" id="AAW87319">
    <property type="protein sequence ID" value="AAW87319"/>
    <property type="gene ID" value="VF_A0249"/>
</dbReference>
<dbReference type="GeneID" id="54165571"/>
<dbReference type="KEGG" id="vfi:VF_A0249"/>
<dbReference type="PATRIC" id="fig|312309.11.peg.2853"/>
<dbReference type="eggNOG" id="COG3075">
    <property type="taxonomic scope" value="Bacteria"/>
</dbReference>
<dbReference type="HOGENOM" id="CLU_047793_0_0_6"/>
<dbReference type="OrthoDB" id="6395323at2"/>
<dbReference type="UniPathway" id="UPA00618">
    <property type="reaction ID" value="UER00673"/>
</dbReference>
<dbReference type="Proteomes" id="UP000000537">
    <property type="component" value="Chromosome II"/>
</dbReference>
<dbReference type="GO" id="GO:0009331">
    <property type="term" value="C:glycerol-3-phosphate dehydrogenase (FAD) complex"/>
    <property type="evidence" value="ECO:0007669"/>
    <property type="project" value="InterPro"/>
</dbReference>
<dbReference type="GO" id="GO:0004368">
    <property type="term" value="F:glycerol-3-phosphate dehydrogenase (quinone) activity"/>
    <property type="evidence" value="ECO:0007669"/>
    <property type="project" value="UniProtKB-UniRule"/>
</dbReference>
<dbReference type="GO" id="GO:0019563">
    <property type="term" value="P:glycerol catabolic process"/>
    <property type="evidence" value="ECO:0007669"/>
    <property type="project" value="UniProtKB-UniRule"/>
</dbReference>
<dbReference type="Gene3D" id="3.50.50.60">
    <property type="entry name" value="FAD/NAD(P)-binding domain"/>
    <property type="match status" value="1"/>
</dbReference>
<dbReference type="HAMAP" id="MF_00753">
    <property type="entry name" value="Glycerol3P_GlpB"/>
    <property type="match status" value="1"/>
</dbReference>
<dbReference type="InterPro" id="IPR003953">
    <property type="entry name" value="FAD-dep_OxRdtase_2_FAD-bd"/>
</dbReference>
<dbReference type="InterPro" id="IPR036188">
    <property type="entry name" value="FAD/NAD-bd_sf"/>
</dbReference>
<dbReference type="InterPro" id="IPR009158">
    <property type="entry name" value="G3P_DH_GlpB_su"/>
</dbReference>
<dbReference type="InterPro" id="IPR051691">
    <property type="entry name" value="Metab_Enz_Cyan_OpOx_G3PDH"/>
</dbReference>
<dbReference type="NCBIfam" id="TIGR03378">
    <property type="entry name" value="glycerol3P_GlpB"/>
    <property type="match status" value="1"/>
</dbReference>
<dbReference type="NCBIfam" id="NF003719">
    <property type="entry name" value="PRK05329.1-2"/>
    <property type="match status" value="1"/>
</dbReference>
<dbReference type="NCBIfam" id="NF003720">
    <property type="entry name" value="PRK05329.1-3"/>
    <property type="match status" value="1"/>
</dbReference>
<dbReference type="PANTHER" id="PTHR42949">
    <property type="entry name" value="ANAEROBIC GLYCEROL-3-PHOSPHATE DEHYDROGENASE SUBUNIT B"/>
    <property type="match status" value="1"/>
</dbReference>
<dbReference type="PANTHER" id="PTHR42949:SF3">
    <property type="entry name" value="ANAEROBIC GLYCEROL-3-PHOSPHATE DEHYDROGENASE SUBUNIT B"/>
    <property type="match status" value="1"/>
</dbReference>
<dbReference type="Pfam" id="PF00890">
    <property type="entry name" value="FAD_binding_2"/>
    <property type="match status" value="1"/>
</dbReference>
<dbReference type="PIRSF" id="PIRSF000141">
    <property type="entry name" value="Anaerobic_G3P_dh"/>
    <property type="match status" value="1"/>
</dbReference>
<dbReference type="SUPFAM" id="SSF51905">
    <property type="entry name" value="FAD/NAD(P)-binding domain"/>
    <property type="match status" value="1"/>
</dbReference>
<gene>
    <name evidence="1" type="primary">glpB</name>
    <name type="ordered locus">VF_A0249</name>
</gene>